<proteinExistence type="inferred from homology"/>
<comment type="function">
    <text evidence="1">The arginine-rich C-terminal region protrudes from the mycobacterial membrane and mediates M.tuberculosis entry into host epithelial cells. May serve as a bridge between mycobacteria and host cells by interacting with specific host phospholipids and extracting them from host cells, for their direct integration or as a source of phosphate, during phases of TB pathogenesis when M.tuberculosis is short of phosphate supply.</text>
</comment>
<comment type="subcellular location">
    <subcellularLocation>
        <location evidence="1">Cell outer membrane</location>
    </subcellularLocation>
    <subcellularLocation>
        <location evidence="1">Secreted</location>
    </subcellularLocation>
    <subcellularLocation>
        <location evidence="1">Secreted</location>
        <location evidence="1">Cell wall</location>
    </subcellularLocation>
    <subcellularLocation>
        <location evidence="1">Cell surface</location>
    </subcellularLocation>
</comment>
<comment type="similarity">
    <text evidence="4">Belongs to the mycobacterial PE family. PGRS subfamily.</text>
</comment>
<comment type="sequence caution" evidence="4">
    <conflict type="erroneous initiation">
        <sequence resource="EMBL-CDS" id="AAK44511"/>
    </conflict>
</comment>
<evidence type="ECO:0000250" key="1">
    <source>
        <dbReference type="UniProtKB" id="P9WIG3"/>
    </source>
</evidence>
<evidence type="ECO:0000255" key="2"/>
<evidence type="ECO:0000256" key="3">
    <source>
        <dbReference type="SAM" id="MobiDB-lite"/>
    </source>
</evidence>
<evidence type="ECO:0000305" key="4"/>
<organism>
    <name type="scientific">Mycobacterium tuberculosis (strain CDC 1551 / Oshkosh)</name>
    <dbReference type="NCBI Taxonomy" id="83331"/>
    <lineage>
        <taxon>Bacteria</taxon>
        <taxon>Bacillati</taxon>
        <taxon>Actinomycetota</taxon>
        <taxon>Actinomycetes</taxon>
        <taxon>Mycobacteriales</taxon>
        <taxon>Mycobacteriaceae</taxon>
        <taxon>Mycobacterium</taxon>
        <taxon>Mycobacterium tuberculosis complex</taxon>
    </lineage>
</organism>
<reference key="1">
    <citation type="journal article" date="2002" name="J. Bacteriol.">
        <title>Whole-genome comparison of Mycobacterium tuberculosis clinical and laboratory strains.</title>
        <authorList>
            <person name="Fleischmann R.D."/>
            <person name="Alland D."/>
            <person name="Eisen J.A."/>
            <person name="Carpenter L."/>
            <person name="White O."/>
            <person name="Peterson J.D."/>
            <person name="DeBoy R.T."/>
            <person name="Dodson R.J."/>
            <person name="Gwinn M.L."/>
            <person name="Haft D.H."/>
            <person name="Hickey E.K."/>
            <person name="Kolonay J.F."/>
            <person name="Nelson W.C."/>
            <person name="Umayam L.A."/>
            <person name="Ermolaeva M.D."/>
            <person name="Salzberg S.L."/>
            <person name="Delcher A."/>
            <person name="Utterback T.R."/>
            <person name="Weidman J.F."/>
            <person name="Khouri H.M."/>
            <person name="Gill J."/>
            <person name="Mikula A."/>
            <person name="Bishai W."/>
            <person name="Jacobs W.R. Jr."/>
            <person name="Venter J.C."/>
            <person name="Fraser C.M."/>
        </authorList>
    </citation>
    <scope>NUCLEOTIDE SEQUENCE [LARGE SCALE GENOMIC DNA]</scope>
    <source>
        <strain>CDC 1551 / Oshkosh</strain>
    </source>
</reference>
<accession>P9WIG2</accession>
<accession>L0T5Z6</accession>
<accession>P56877</accession>
<protein>
    <recommendedName>
        <fullName>PE-PGRS family protein PE_PGRS3</fullName>
    </recommendedName>
</protein>
<feature type="chain" id="PRO_0000428012" description="PE-PGRS family protein PE_PGRS3">
    <location>
        <begin position="1"/>
        <end position="951"/>
    </location>
</feature>
<feature type="domain" description="PE" evidence="2">
    <location>
        <begin position="4"/>
        <end position="94"/>
    </location>
</feature>
<feature type="region of interest" description="Disordered" evidence="3">
    <location>
        <begin position="887"/>
        <end position="951"/>
    </location>
</feature>
<feature type="compositionally biased region" description="Basic residues" evidence="3">
    <location>
        <begin position="887"/>
        <end position="919"/>
    </location>
</feature>
<name>PG03_MYCTO</name>
<dbReference type="EMBL" id="AE000516">
    <property type="protein sequence ID" value="AAK44511.1"/>
    <property type="status" value="ALT_INIT"/>
    <property type="molecule type" value="Genomic_DNA"/>
</dbReference>
<dbReference type="PIR" id="D70835">
    <property type="entry name" value="D70835"/>
</dbReference>
<dbReference type="RefSeq" id="WP_042507423.1">
    <property type="nucleotide sequence ID" value="NC_002755.2"/>
</dbReference>
<dbReference type="KEGG" id="mtc:MT0291"/>
<dbReference type="HOGENOM" id="CLU_000167_20_1_11"/>
<dbReference type="Proteomes" id="UP000001020">
    <property type="component" value="Chromosome"/>
</dbReference>
<dbReference type="GO" id="GO:0009279">
    <property type="term" value="C:cell outer membrane"/>
    <property type="evidence" value="ECO:0007669"/>
    <property type="project" value="UniProtKB-SubCell"/>
</dbReference>
<dbReference type="GO" id="GO:0009986">
    <property type="term" value="C:cell surface"/>
    <property type="evidence" value="ECO:0007669"/>
    <property type="project" value="UniProtKB-SubCell"/>
</dbReference>
<dbReference type="GO" id="GO:0005576">
    <property type="term" value="C:extracellular region"/>
    <property type="evidence" value="ECO:0007669"/>
    <property type="project" value="UniProtKB-SubCell"/>
</dbReference>
<dbReference type="FunFam" id="1.10.287.850:FF:000001">
    <property type="entry name" value="PE_PGRS39"/>
    <property type="match status" value="1"/>
</dbReference>
<dbReference type="Gene3D" id="1.10.287.850">
    <property type="entry name" value="HP0062-like domain"/>
    <property type="match status" value="1"/>
</dbReference>
<dbReference type="InterPro" id="IPR000084">
    <property type="entry name" value="PE-PGRS_N"/>
</dbReference>
<dbReference type="Pfam" id="PF00934">
    <property type="entry name" value="PE"/>
    <property type="match status" value="1"/>
</dbReference>
<dbReference type="SUPFAM" id="SSF140459">
    <property type="entry name" value="PE/PPE dimer-like"/>
    <property type="match status" value="1"/>
</dbReference>
<sequence length="951" mass="81374">MSFVIAAPEVIAAAATDLASLGSSISAANAAAAANTTALIAAGADEVSTAIAALFGAHGQAYQALSAQAQAFHAQFVQALTSGGGAYAAAEAAAVSPLLDPINEFFLANTGRPLIGNGANGAPGTGANGGDGGWLIGNGGAGGSGAAGVNGGAGGNGGAGGLIGNGGAGGAGGVASSGIGGSGGAGGNAMLFGAGGAGGAGGGVVALTGGAGGAGGAGGNAGLLFGAAGVGGAGGFTNGSALGGAGGAGGAGGLFATGGVGGSGGAGSSGGAGGAGGAGGLFGAGGTGGHGGFADSSFGGVGGAGGAGGLFGAGGEGGSGGHSLVAGGDGGAGGNAGMLALGAAGGAGGIGGDGGTLTAGGIGGAGGAGGNAGLLFGSGGSGGAGGFGFADGGQGGPGGNAGTVFGSGGAGGNGGVGQGFAGGIGGAGGTPGLIGNGGNGGNGGASAVTGGNGGIGGTGVLIGNGGNGGSGGIGAGKAGVGGVSGLLLGLDGFNAPASTSPLHTLQQNVLNVVNEPFQTLTGRPLIGNGANGTPGTGADGGAGGWLFGNGANGTPGTGAAGGAGGWLFGNGGNGGHGATNTAATATGGAGGAGGILFGTGGNGGTGGIATGAGGIGGAGGAGGVSLLIGSGGTGGNGGNSIGVAGIGGAGGRGGDAGLLFGAAGTGGHGAAGGVPAGVGGAGGNGGLFANGGAGGAGGFNAAGGNGGNGGLFGTGGTGGAGTNFGAGGNGGNGGLFGAGGTGGAAGSGGSGITTGGGGHGGNAGLLSLGASGGAGGSGGASSLAGGAGGTGGNGALLFGFGGAGGAGGHGGAALTSIQQGGAGGAGGNGGLLFGSAGAGGAGGSGANALGAGTGGTGGDGGHAGVFGNGGDGGCRRVWRRYRRQRWCRRQRRADRQRRQRRQRRQSRGHARCRRHRRAAARRERTQRLAIAGRPATTRGVEGISCSPQMMP</sequence>
<gene>
    <name type="primary">PE_PGRS3</name>
    <name type="ordered locus">MT0291</name>
</gene>
<keyword id="KW-0998">Cell outer membrane</keyword>
<keyword id="KW-0134">Cell wall</keyword>
<keyword id="KW-0472">Membrane</keyword>
<keyword id="KW-1185">Reference proteome</keyword>
<keyword id="KW-0677">Repeat</keyword>
<keyword id="KW-0964">Secreted</keyword>
<keyword id="KW-0843">Virulence</keyword>